<comment type="function">
    <text evidence="1">Bacteriocin active against S.aureus, E.coli, Salmonella sp. and Streptococcus sp.</text>
</comment>
<comment type="subcellular location">
    <subcellularLocation>
        <location evidence="1">Secreted</location>
    </subcellularLocation>
</comment>
<proteinExistence type="evidence at protein level"/>
<keyword id="KW-0044">Antibiotic</keyword>
<keyword id="KW-0929">Antimicrobial</keyword>
<keyword id="KW-0078">Bacteriocin</keyword>
<keyword id="KW-0903">Direct protein sequencing</keyword>
<keyword id="KW-0964">Secreted</keyword>
<feature type="chain" id="PRO_0000450054" description="Bacteriocin" evidence="1">
    <location>
        <begin position="1"/>
        <end position="86"/>
    </location>
</feature>
<evidence type="ECO:0000269" key="1">
    <source ref="1"/>
</evidence>
<evidence type="ECO:0000303" key="2">
    <source ref="1"/>
</evidence>
<evidence type="ECO:0000305" key="3"/>
<organism evidence="2">
    <name type="scientific">Enterococcus thailandicus</name>
    <dbReference type="NCBI Taxonomy" id="417368"/>
    <lineage>
        <taxon>Bacteria</taxon>
        <taxon>Bacillati</taxon>
        <taxon>Bacillota</taxon>
        <taxon>Bacilli</taxon>
        <taxon>Lactobacillales</taxon>
        <taxon>Enterococcaceae</taxon>
        <taxon>Enterococcus</taxon>
    </lineage>
</organism>
<sequence length="86" mass="8633">KKNMLLVNPIVGIGGLFVGAPMLTANLGISSYAAKKVIDDINTGSAVATIIALVTAVVGGGLITAGIVATTKSLIKKYGAKYSAAW</sequence>
<dbReference type="SMR" id="C0HL87"/>
<dbReference type="GO" id="GO:0005576">
    <property type="term" value="C:extracellular region"/>
    <property type="evidence" value="ECO:0007669"/>
    <property type="project" value="UniProtKB-SubCell"/>
</dbReference>
<dbReference type="GO" id="GO:0042742">
    <property type="term" value="P:defense response to bacterium"/>
    <property type="evidence" value="ECO:0007669"/>
    <property type="project" value="UniProtKB-KW"/>
</dbReference>
<dbReference type="GO" id="GO:0031640">
    <property type="term" value="P:killing of cells of another organism"/>
    <property type="evidence" value="ECO:0007669"/>
    <property type="project" value="UniProtKB-KW"/>
</dbReference>
<dbReference type="Gene3D" id="1.20.225.10">
    <property type="entry name" value="Bacteriocin AS-48"/>
    <property type="match status" value="1"/>
</dbReference>
<dbReference type="InterPro" id="IPR009086">
    <property type="entry name" value="Bacteriocin_AS48"/>
</dbReference>
<dbReference type="InterPro" id="IPR020038">
    <property type="entry name" value="Circ_bacteriocin"/>
</dbReference>
<dbReference type="NCBIfam" id="TIGR03651">
    <property type="entry name" value="circ_ocin_uber"/>
    <property type="match status" value="1"/>
</dbReference>
<dbReference type="Pfam" id="PF09221">
    <property type="entry name" value="Bacteriocin_IId"/>
    <property type="match status" value="1"/>
</dbReference>
<name>BACT_ENTTH</name>
<protein>
    <recommendedName>
        <fullName evidence="2">Bacteriocin</fullName>
    </recommendedName>
</protein>
<reference evidence="3" key="1">
    <citation type="submission" date="2018-02" db="UniProtKB">
        <authorList>
            <person name="Mohamedali S."/>
            <person name="Elmadboly L."/>
        </authorList>
    </citation>
    <scope>PROTEIN SEQUENCE</scope>
    <scope>FUNCTION</scope>
    <scope>SUBCELLULAR LOCATION</scope>
</reference>
<accession>C0HL87</accession>